<organism>
    <name type="scientific">Listeria monocytogenes serotype 4a (strain HCC23)</name>
    <dbReference type="NCBI Taxonomy" id="552536"/>
    <lineage>
        <taxon>Bacteria</taxon>
        <taxon>Bacillati</taxon>
        <taxon>Bacillota</taxon>
        <taxon>Bacilli</taxon>
        <taxon>Bacillales</taxon>
        <taxon>Listeriaceae</taxon>
        <taxon>Listeria</taxon>
    </lineage>
</organism>
<gene>
    <name evidence="1" type="primary">thiM</name>
    <name type="ordered locus">LMHCC_2317</name>
</gene>
<accession>B8DET2</accession>
<protein>
    <recommendedName>
        <fullName evidence="1">Hydroxyethylthiazole kinase</fullName>
        <ecNumber evidence="1">2.7.1.50</ecNumber>
    </recommendedName>
    <alternativeName>
        <fullName evidence="1">4-methyl-5-beta-hydroxyethylthiazole kinase</fullName>
        <shortName evidence="1">TH kinase</shortName>
        <shortName evidence="1">Thz kinase</shortName>
    </alternativeName>
</protein>
<proteinExistence type="inferred from homology"/>
<feature type="chain" id="PRO_1000198127" description="Hydroxyethylthiazole kinase">
    <location>
        <begin position="1"/>
        <end position="269"/>
    </location>
</feature>
<feature type="binding site" evidence="1">
    <location>
        <position position="42"/>
    </location>
    <ligand>
        <name>substrate</name>
    </ligand>
</feature>
<feature type="binding site" evidence="1">
    <location>
        <position position="118"/>
    </location>
    <ligand>
        <name>ATP</name>
        <dbReference type="ChEBI" id="CHEBI:30616"/>
    </ligand>
</feature>
<feature type="binding site" evidence="1">
    <location>
        <position position="164"/>
    </location>
    <ligand>
        <name>ATP</name>
        <dbReference type="ChEBI" id="CHEBI:30616"/>
    </ligand>
</feature>
<feature type="binding site" evidence="1">
    <location>
        <position position="191"/>
    </location>
    <ligand>
        <name>substrate</name>
    </ligand>
</feature>
<comment type="function">
    <text evidence="1">Catalyzes the phosphorylation of the hydroxyl group of 4-methyl-5-beta-hydroxyethylthiazole (THZ).</text>
</comment>
<comment type="catalytic activity">
    <reaction evidence="1">
        <text>5-(2-hydroxyethyl)-4-methylthiazole + ATP = 4-methyl-5-(2-phosphooxyethyl)-thiazole + ADP + H(+)</text>
        <dbReference type="Rhea" id="RHEA:24212"/>
        <dbReference type="ChEBI" id="CHEBI:15378"/>
        <dbReference type="ChEBI" id="CHEBI:17957"/>
        <dbReference type="ChEBI" id="CHEBI:30616"/>
        <dbReference type="ChEBI" id="CHEBI:58296"/>
        <dbReference type="ChEBI" id="CHEBI:456216"/>
        <dbReference type="EC" id="2.7.1.50"/>
    </reaction>
</comment>
<comment type="cofactor">
    <cofactor evidence="1">
        <name>Mg(2+)</name>
        <dbReference type="ChEBI" id="CHEBI:18420"/>
    </cofactor>
</comment>
<comment type="pathway">
    <text evidence="1">Cofactor biosynthesis; thiamine diphosphate biosynthesis; 4-methyl-5-(2-phosphoethyl)-thiazole from 5-(2-hydroxyethyl)-4-methylthiazole: step 1/1.</text>
</comment>
<comment type="similarity">
    <text evidence="1">Belongs to the Thz kinase family.</text>
</comment>
<sequence>MFDFMTLEKVREKGPLVHNITNIVVANDSANGLLAIGASPIMASAKEEMDELAKMADVLVINIGTLDGELVEAMKIAGRAANVAGTPVVLDPVGVGATSYRRKVVQELLAEIQFTAIRGNAGELAAIAGEAWEAKGVDAGVGSADVLSIAEKVANEWSTVVIISGEVDVISDGTRFAKVANGSALLPRITGSGCLLSAVCGSFIAVQDDAFRASVEACASYAVASEYAELELERKLPGSFRPLFLDALASWSVEKTHAKAKIQESGEHK</sequence>
<name>THIM_LISMH</name>
<keyword id="KW-0067">ATP-binding</keyword>
<keyword id="KW-0418">Kinase</keyword>
<keyword id="KW-0460">Magnesium</keyword>
<keyword id="KW-0479">Metal-binding</keyword>
<keyword id="KW-0547">Nucleotide-binding</keyword>
<keyword id="KW-0784">Thiamine biosynthesis</keyword>
<keyword id="KW-0808">Transferase</keyword>
<reference key="1">
    <citation type="journal article" date="2011" name="J. Bacteriol.">
        <title>Genome sequence of lineage III Listeria monocytogenes strain HCC23.</title>
        <authorList>
            <person name="Steele C.L."/>
            <person name="Donaldson J.R."/>
            <person name="Paul D."/>
            <person name="Banes M.M."/>
            <person name="Arick T."/>
            <person name="Bridges S.M."/>
            <person name="Lawrence M.L."/>
        </authorList>
    </citation>
    <scope>NUCLEOTIDE SEQUENCE [LARGE SCALE GENOMIC DNA]</scope>
    <source>
        <strain>HCC23</strain>
    </source>
</reference>
<dbReference type="EC" id="2.7.1.50" evidence="1"/>
<dbReference type="EMBL" id="CP001175">
    <property type="protein sequence ID" value="ACK40654.1"/>
    <property type="molecule type" value="Genomic_DNA"/>
</dbReference>
<dbReference type="RefSeq" id="WP_012582022.1">
    <property type="nucleotide sequence ID" value="NC_011660.1"/>
</dbReference>
<dbReference type="SMR" id="B8DET2"/>
<dbReference type="KEGG" id="lmh:LMHCC_2317"/>
<dbReference type="HOGENOM" id="CLU_019943_0_0_9"/>
<dbReference type="UniPathway" id="UPA00060">
    <property type="reaction ID" value="UER00139"/>
</dbReference>
<dbReference type="GO" id="GO:0005524">
    <property type="term" value="F:ATP binding"/>
    <property type="evidence" value="ECO:0007669"/>
    <property type="project" value="UniProtKB-UniRule"/>
</dbReference>
<dbReference type="GO" id="GO:0004417">
    <property type="term" value="F:hydroxyethylthiazole kinase activity"/>
    <property type="evidence" value="ECO:0007669"/>
    <property type="project" value="UniProtKB-UniRule"/>
</dbReference>
<dbReference type="GO" id="GO:0000287">
    <property type="term" value="F:magnesium ion binding"/>
    <property type="evidence" value="ECO:0007669"/>
    <property type="project" value="UniProtKB-UniRule"/>
</dbReference>
<dbReference type="GO" id="GO:0009228">
    <property type="term" value="P:thiamine biosynthetic process"/>
    <property type="evidence" value="ECO:0007669"/>
    <property type="project" value="UniProtKB-KW"/>
</dbReference>
<dbReference type="GO" id="GO:0009229">
    <property type="term" value="P:thiamine diphosphate biosynthetic process"/>
    <property type="evidence" value="ECO:0007669"/>
    <property type="project" value="UniProtKB-UniRule"/>
</dbReference>
<dbReference type="CDD" id="cd01170">
    <property type="entry name" value="THZ_kinase"/>
    <property type="match status" value="1"/>
</dbReference>
<dbReference type="Gene3D" id="3.40.1190.20">
    <property type="match status" value="1"/>
</dbReference>
<dbReference type="HAMAP" id="MF_00228">
    <property type="entry name" value="Thz_kinase"/>
    <property type="match status" value="1"/>
</dbReference>
<dbReference type="InterPro" id="IPR000417">
    <property type="entry name" value="Hyethyz_kinase"/>
</dbReference>
<dbReference type="InterPro" id="IPR029056">
    <property type="entry name" value="Ribokinase-like"/>
</dbReference>
<dbReference type="NCBIfam" id="NF006830">
    <property type="entry name" value="PRK09355.1"/>
    <property type="match status" value="1"/>
</dbReference>
<dbReference type="NCBIfam" id="TIGR00694">
    <property type="entry name" value="thiM"/>
    <property type="match status" value="1"/>
</dbReference>
<dbReference type="Pfam" id="PF02110">
    <property type="entry name" value="HK"/>
    <property type="match status" value="1"/>
</dbReference>
<dbReference type="PIRSF" id="PIRSF000513">
    <property type="entry name" value="Thz_kinase"/>
    <property type="match status" value="1"/>
</dbReference>
<dbReference type="PRINTS" id="PR01099">
    <property type="entry name" value="HYETHTZKNASE"/>
</dbReference>
<dbReference type="SUPFAM" id="SSF53613">
    <property type="entry name" value="Ribokinase-like"/>
    <property type="match status" value="1"/>
</dbReference>
<evidence type="ECO:0000255" key="1">
    <source>
        <dbReference type="HAMAP-Rule" id="MF_00228"/>
    </source>
</evidence>